<feature type="chain" id="PRO_0000385834" description="GTPase Obg">
    <location>
        <begin position="1"/>
        <end position="390"/>
    </location>
</feature>
<feature type="domain" description="Obg" evidence="2">
    <location>
        <begin position="1"/>
        <end position="159"/>
    </location>
</feature>
<feature type="domain" description="OBG-type G" evidence="1">
    <location>
        <begin position="160"/>
        <end position="333"/>
    </location>
</feature>
<feature type="region of interest" description="Disordered" evidence="3">
    <location>
        <begin position="127"/>
        <end position="147"/>
    </location>
</feature>
<feature type="compositionally biased region" description="Polar residues" evidence="3">
    <location>
        <begin position="129"/>
        <end position="143"/>
    </location>
</feature>
<feature type="binding site" evidence="1">
    <location>
        <begin position="166"/>
        <end position="173"/>
    </location>
    <ligand>
        <name>GTP</name>
        <dbReference type="ChEBI" id="CHEBI:37565"/>
    </ligand>
</feature>
<feature type="binding site" evidence="1">
    <location>
        <position position="173"/>
    </location>
    <ligand>
        <name>Mg(2+)</name>
        <dbReference type="ChEBI" id="CHEBI:18420"/>
    </ligand>
</feature>
<feature type="binding site" evidence="1">
    <location>
        <begin position="191"/>
        <end position="195"/>
    </location>
    <ligand>
        <name>GTP</name>
        <dbReference type="ChEBI" id="CHEBI:37565"/>
    </ligand>
</feature>
<feature type="binding site" evidence="1">
    <location>
        <position position="193"/>
    </location>
    <ligand>
        <name>Mg(2+)</name>
        <dbReference type="ChEBI" id="CHEBI:18420"/>
    </ligand>
</feature>
<feature type="binding site" evidence="1">
    <location>
        <begin position="213"/>
        <end position="216"/>
    </location>
    <ligand>
        <name>GTP</name>
        <dbReference type="ChEBI" id="CHEBI:37565"/>
    </ligand>
</feature>
<feature type="binding site" evidence="1">
    <location>
        <begin position="283"/>
        <end position="286"/>
    </location>
    <ligand>
        <name>GTP</name>
        <dbReference type="ChEBI" id="CHEBI:37565"/>
    </ligand>
</feature>
<feature type="binding site" evidence="1">
    <location>
        <begin position="314"/>
        <end position="316"/>
    </location>
    <ligand>
        <name>GTP</name>
        <dbReference type="ChEBI" id="CHEBI:37565"/>
    </ligand>
</feature>
<accession>A8AQ74</accession>
<reference key="1">
    <citation type="submission" date="2007-08" db="EMBL/GenBank/DDBJ databases">
        <authorList>
            <consortium name="The Citrobacter koseri Genome Sequencing Project"/>
            <person name="McClelland M."/>
            <person name="Sanderson E.K."/>
            <person name="Porwollik S."/>
            <person name="Spieth J."/>
            <person name="Clifton W.S."/>
            <person name="Latreille P."/>
            <person name="Courtney L."/>
            <person name="Wang C."/>
            <person name="Pepin K."/>
            <person name="Bhonagiri V."/>
            <person name="Nash W."/>
            <person name="Johnson M."/>
            <person name="Thiruvilangam P."/>
            <person name="Wilson R."/>
        </authorList>
    </citation>
    <scope>NUCLEOTIDE SEQUENCE [LARGE SCALE GENOMIC DNA]</scope>
    <source>
        <strain>ATCC BAA-895 / CDC 4225-83 / SGSC4696</strain>
    </source>
</reference>
<gene>
    <name evidence="1" type="primary">obg</name>
    <name type="ordered locus">CKO_04587</name>
</gene>
<organism>
    <name type="scientific">Citrobacter koseri (strain ATCC BAA-895 / CDC 4225-83 / SGSC4696)</name>
    <dbReference type="NCBI Taxonomy" id="290338"/>
    <lineage>
        <taxon>Bacteria</taxon>
        <taxon>Pseudomonadati</taxon>
        <taxon>Pseudomonadota</taxon>
        <taxon>Gammaproteobacteria</taxon>
        <taxon>Enterobacterales</taxon>
        <taxon>Enterobacteriaceae</taxon>
        <taxon>Citrobacter</taxon>
    </lineage>
</organism>
<name>OBG_CITK8</name>
<sequence length="390" mass="43209">MKFVDEASILVVAGDGGNGCVSFRREKYIPKGGPDGGDGGDGGDVWLEADENLNTLIDYRFEKSFRAERGQNGASRDCTGKRGKDVTIKVPVGTRVIDQGTGETMGDMTKHGQRLMVAKGGWHGLGNTRFKSSVNRTPRQKTMGTPGDKRDLMLELMLLADVGMLGMPNAGKSTFIRAVSAAKPKVADYPFTTLVPSLGVVRMDNEKSFVVADIPGLIEGAAEGAGLGIRFLKHLERCRVLLHLIDIDPIDGSDPVENARIIIGELEKYSQDLAAKPRWLVFNKIDLLDQAEAEEKAKAIAQALGWEDKYYMISAASQTGVKDLCWDVMTFIIENPIVQADEAKQPEKVEFMWDDYHRQQLAEVEDEAEDDWDDDWDEDDEEGVEFIYKR</sequence>
<keyword id="KW-0963">Cytoplasm</keyword>
<keyword id="KW-0342">GTP-binding</keyword>
<keyword id="KW-0378">Hydrolase</keyword>
<keyword id="KW-0460">Magnesium</keyword>
<keyword id="KW-0479">Metal-binding</keyword>
<keyword id="KW-0547">Nucleotide-binding</keyword>
<keyword id="KW-1185">Reference proteome</keyword>
<proteinExistence type="inferred from homology"/>
<protein>
    <recommendedName>
        <fullName evidence="1">GTPase Obg</fullName>
        <ecNumber evidence="1">3.6.5.-</ecNumber>
    </recommendedName>
    <alternativeName>
        <fullName evidence="1">GTP-binding protein Obg</fullName>
    </alternativeName>
</protein>
<evidence type="ECO:0000255" key="1">
    <source>
        <dbReference type="HAMAP-Rule" id="MF_01454"/>
    </source>
</evidence>
<evidence type="ECO:0000255" key="2">
    <source>
        <dbReference type="PROSITE-ProRule" id="PRU01231"/>
    </source>
</evidence>
<evidence type="ECO:0000256" key="3">
    <source>
        <dbReference type="SAM" id="MobiDB-lite"/>
    </source>
</evidence>
<dbReference type="EC" id="3.6.5.-" evidence="1"/>
<dbReference type="EMBL" id="CP000822">
    <property type="protein sequence ID" value="ABV15638.1"/>
    <property type="molecule type" value="Genomic_DNA"/>
</dbReference>
<dbReference type="SMR" id="A8AQ74"/>
<dbReference type="STRING" id="290338.CKO_04587"/>
<dbReference type="GeneID" id="45138126"/>
<dbReference type="KEGG" id="cko:CKO_04587"/>
<dbReference type="HOGENOM" id="CLU_011747_2_0_6"/>
<dbReference type="OrthoDB" id="9807318at2"/>
<dbReference type="Proteomes" id="UP000008148">
    <property type="component" value="Chromosome"/>
</dbReference>
<dbReference type="GO" id="GO:0005737">
    <property type="term" value="C:cytoplasm"/>
    <property type="evidence" value="ECO:0007669"/>
    <property type="project" value="UniProtKB-SubCell"/>
</dbReference>
<dbReference type="GO" id="GO:0005525">
    <property type="term" value="F:GTP binding"/>
    <property type="evidence" value="ECO:0007669"/>
    <property type="project" value="UniProtKB-UniRule"/>
</dbReference>
<dbReference type="GO" id="GO:0003924">
    <property type="term" value="F:GTPase activity"/>
    <property type="evidence" value="ECO:0007669"/>
    <property type="project" value="UniProtKB-UniRule"/>
</dbReference>
<dbReference type="GO" id="GO:0000287">
    <property type="term" value="F:magnesium ion binding"/>
    <property type="evidence" value="ECO:0007669"/>
    <property type="project" value="InterPro"/>
</dbReference>
<dbReference type="GO" id="GO:0042254">
    <property type="term" value="P:ribosome biogenesis"/>
    <property type="evidence" value="ECO:0007669"/>
    <property type="project" value="UniProtKB-UniRule"/>
</dbReference>
<dbReference type="CDD" id="cd01898">
    <property type="entry name" value="Obg"/>
    <property type="match status" value="1"/>
</dbReference>
<dbReference type="FunFam" id="2.70.210.12:FF:000001">
    <property type="entry name" value="GTPase Obg"/>
    <property type="match status" value="1"/>
</dbReference>
<dbReference type="FunFam" id="3.40.50.300:FF:000185">
    <property type="entry name" value="GTPase Obg"/>
    <property type="match status" value="1"/>
</dbReference>
<dbReference type="Gene3D" id="2.70.210.12">
    <property type="entry name" value="GTP1/OBG domain"/>
    <property type="match status" value="1"/>
</dbReference>
<dbReference type="Gene3D" id="3.40.50.300">
    <property type="entry name" value="P-loop containing nucleotide triphosphate hydrolases"/>
    <property type="match status" value="1"/>
</dbReference>
<dbReference type="HAMAP" id="MF_01454">
    <property type="entry name" value="GTPase_Obg"/>
    <property type="match status" value="1"/>
</dbReference>
<dbReference type="InterPro" id="IPR031167">
    <property type="entry name" value="G_OBG"/>
</dbReference>
<dbReference type="InterPro" id="IPR006073">
    <property type="entry name" value="GTP-bd"/>
</dbReference>
<dbReference type="InterPro" id="IPR014100">
    <property type="entry name" value="GTP-bd_Obg/CgtA"/>
</dbReference>
<dbReference type="InterPro" id="IPR006074">
    <property type="entry name" value="GTP1-OBG_CS"/>
</dbReference>
<dbReference type="InterPro" id="IPR006169">
    <property type="entry name" value="GTP1_OBG_dom"/>
</dbReference>
<dbReference type="InterPro" id="IPR036726">
    <property type="entry name" value="GTP1_OBG_dom_sf"/>
</dbReference>
<dbReference type="InterPro" id="IPR045086">
    <property type="entry name" value="OBG_GTPase"/>
</dbReference>
<dbReference type="InterPro" id="IPR027417">
    <property type="entry name" value="P-loop_NTPase"/>
</dbReference>
<dbReference type="NCBIfam" id="TIGR02729">
    <property type="entry name" value="Obg_CgtA"/>
    <property type="match status" value="1"/>
</dbReference>
<dbReference type="NCBIfam" id="NF008955">
    <property type="entry name" value="PRK12297.1"/>
    <property type="match status" value="1"/>
</dbReference>
<dbReference type="NCBIfam" id="NF008956">
    <property type="entry name" value="PRK12299.1"/>
    <property type="match status" value="1"/>
</dbReference>
<dbReference type="PANTHER" id="PTHR11702">
    <property type="entry name" value="DEVELOPMENTALLY REGULATED GTP-BINDING PROTEIN-RELATED"/>
    <property type="match status" value="1"/>
</dbReference>
<dbReference type="PANTHER" id="PTHR11702:SF31">
    <property type="entry name" value="MITOCHONDRIAL RIBOSOME-ASSOCIATED GTPASE 2"/>
    <property type="match status" value="1"/>
</dbReference>
<dbReference type="Pfam" id="PF01018">
    <property type="entry name" value="GTP1_OBG"/>
    <property type="match status" value="1"/>
</dbReference>
<dbReference type="Pfam" id="PF01926">
    <property type="entry name" value="MMR_HSR1"/>
    <property type="match status" value="1"/>
</dbReference>
<dbReference type="PIRSF" id="PIRSF002401">
    <property type="entry name" value="GTP_bd_Obg/CgtA"/>
    <property type="match status" value="1"/>
</dbReference>
<dbReference type="PRINTS" id="PR00326">
    <property type="entry name" value="GTP1OBG"/>
</dbReference>
<dbReference type="SUPFAM" id="SSF82051">
    <property type="entry name" value="Obg GTP-binding protein N-terminal domain"/>
    <property type="match status" value="1"/>
</dbReference>
<dbReference type="SUPFAM" id="SSF52540">
    <property type="entry name" value="P-loop containing nucleoside triphosphate hydrolases"/>
    <property type="match status" value="1"/>
</dbReference>
<dbReference type="PROSITE" id="PS51710">
    <property type="entry name" value="G_OBG"/>
    <property type="match status" value="1"/>
</dbReference>
<dbReference type="PROSITE" id="PS00905">
    <property type="entry name" value="GTP1_OBG"/>
    <property type="match status" value="1"/>
</dbReference>
<dbReference type="PROSITE" id="PS51883">
    <property type="entry name" value="OBG"/>
    <property type="match status" value="1"/>
</dbReference>
<comment type="function">
    <text evidence="1">An essential GTPase which binds GTP, GDP and possibly (p)ppGpp with moderate affinity, with high nucleotide exchange rates and a fairly low GTP hydrolysis rate. Plays a role in control of the cell cycle, stress response, ribosome biogenesis and in those bacteria that undergo differentiation, in morphogenesis control.</text>
</comment>
<comment type="cofactor">
    <cofactor evidence="1">
        <name>Mg(2+)</name>
        <dbReference type="ChEBI" id="CHEBI:18420"/>
    </cofactor>
</comment>
<comment type="subunit">
    <text evidence="1">Monomer.</text>
</comment>
<comment type="subcellular location">
    <subcellularLocation>
        <location evidence="1">Cytoplasm</location>
    </subcellularLocation>
</comment>
<comment type="similarity">
    <text evidence="1">Belongs to the TRAFAC class OBG-HflX-like GTPase superfamily. OBG GTPase family.</text>
</comment>